<name>NDHI_PROMS</name>
<protein>
    <recommendedName>
        <fullName evidence="1">NAD(P)H-quinone oxidoreductase subunit I</fullName>
        <ecNumber evidence="1">7.1.1.-</ecNumber>
    </recommendedName>
    <alternativeName>
        <fullName evidence="1">NAD(P)H dehydrogenase I subunit I</fullName>
    </alternativeName>
    <alternativeName>
        <fullName evidence="1">NDH-1 subunit I</fullName>
        <shortName evidence="1">NDH-I</shortName>
    </alternativeName>
</protein>
<sequence>MKNFLQQINSYIKEAFNAGKYLYNGLSVTFDHLRRRPVTVQYPYEKLIPSERYRGRIHYEFDKCIACEVCVRVCPINLPVVDWVMNKETKKKELRNYSIDFGVCIFCGNCVEYCPTNCLSMTEEYELATFDRHNLNFDNVALGRLPTNVTTDPSVKPLRELAYLPKGVMDPHEIPASDTRVGKLPEEVYDWMRPESNKNKDKVSNSNN</sequence>
<dbReference type="EC" id="7.1.1.-" evidence="1"/>
<dbReference type="EMBL" id="CP000551">
    <property type="protein sequence ID" value="ABM69465.1"/>
    <property type="molecule type" value="Genomic_DNA"/>
</dbReference>
<dbReference type="RefSeq" id="WP_011817652.1">
    <property type="nucleotide sequence ID" value="NC_008816.1"/>
</dbReference>
<dbReference type="SMR" id="A2BNV4"/>
<dbReference type="STRING" id="146891.A9601_01771"/>
<dbReference type="KEGG" id="pmb:A9601_01771"/>
<dbReference type="eggNOG" id="COG1143">
    <property type="taxonomic scope" value="Bacteria"/>
</dbReference>
<dbReference type="HOGENOM" id="CLU_122804_0_0_3"/>
<dbReference type="OrthoDB" id="9798098at2"/>
<dbReference type="Proteomes" id="UP000002590">
    <property type="component" value="Chromosome"/>
</dbReference>
<dbReference type="GO" id="GO:0031676">
    <property type="term" value="C:plasma membrane-derived thylakoid membrane"/>
    <property type="evidence" value="ECO:0007669"/>
    <property type="project" value="UniProtKB-SubCell"/>
</dbReference>
<dbReference type="GO" id="GO:0051539">
    <property type="term" value="F:4 iron, 4 sulfur cluster binding"/>
    <property type="evidence" value="ECO:0007669"/>
    <property type="project" value="UniProtKB-KW"/>
</dbReference>
<dbReference type="GO" id="GO:0005506">
    <property type="term" value="F:iron ion binding"/>
    <property type="evidence" value="ECO:0007669"/>
    <property type="project" value="UniProtKB-UniRule"/>
</dbReference>
<dbReference type="GO" id="GO:0008137">
    <property type="term" value="F:NADH dehydrogenase (ubiquinone) activity"/>
    <property type="evidence" value="ECO:0007669"/>
    <property type="project" value="InterPro"/>
</dbReference>
<dbReference type="GO" id="GO:0048038">
    <property type="term" value="F:quinone binding"/>
    <property type="evidence" value="ECO:0007669"/>
    <property type="project" value="UniProtKB-KW"/>
</dbReference>
<dbReference type="GO" id="GO:0019684">
    <property type="term" value="P:photosynthesis, light reaction"/>
    <property type="evidence" value="ECO:0007669"/>
    <property type="project" value="UniProtKB-UniRule"/>
</dbReference>
<dbReference type="Gene3D" id="3.30.70.3270">
    <property type="match status" value="1"/>
</dbReference>
<dbReference type="HAMAP" id="MF_01351">
    <property type="entry name" value="NDH1_NuoI"/>
    <property type="match status" value="1"/>
</dbReference>
<dbReference type="InterPro" id="IPR017896">
    <property type="entry name" value="4Fe4S_Fe-S-bd"/>
</dbReference>
<dbReference type="InterPro" id="IPR017900">
    <property type="entry name" value="4Fe4S_Fe_S_CS"/>
</dbReference>
<dbReference type="InterPro" id="IPR010226">
    <property type="entry name" value="NADH_quinone_OxRdtase_chainI"/>
</dbReference>
<dbReference type="InterPro" id="IPR004497">
    <property type="entry name" value="NDHI"/>
</dbReference>
<dbReference type="NCBIfam" id="TIGR00403">
    <property type="entry name" value="ndhI"/>
    <property type="match status" value="1"/>
</dbReference>
<dbReference type="NCBIfam" id="TIGR01971">
    <property type="entry name" value="NuoI"/>
    <property type="match status" value="1"/>
</dbReference>
<dbReference type="NCBIfam" id="NF004537">
    <property type="entry name" value="PRK05888.1-3"/>
    <property type="match status" value="1"/>
</dbReference>
<dbReference type="PANTHER" id="PTHR47275">
    <property type="entry name" value="NAD(P)H-QUINONE OXIDOREDUCTASE SUBUNIT I, CHLOROPLASTIC"/>
    <property type="match status" value="1"/>
</dbReference>
<dbReference type="PANTHER" id="PTHR47275:SF1">
    <property type="entry name" value="NAD(P)H-QUINONE OXIDOREDUCTASE SUBUNIT I, CHLOROPLASTIC"/>
    <property type="match status" value="1"/>
</dbReference>
<dbReference type="Pfam" id="PF12838">
    <property type="entry name" value="Fer4_7"/>
    <property type="match status" value="1"/>
</dbReference>
<dbReference type="SUPFAM" id="SSF54862">
    <property type="entry name" value="4Fe-4S ferredoxins"/>
    <property type="match status" value="1"/>
</dbReference>
<dbReference type="PROSITE" id="PS00198">
    <property type="entry name" value="4FE4S_FER_1"/>
    <property type="match status" value="2"/>
</dbReference>
<dbReference type="PROSITE" id="PS51379">
    <property type="entry name" value="4FE4S_FER_2"/>
    <property type="match status" value="2"/>
</dbReference>
<gene>
    <name evidence="1" type="primary">ndhI</name>
    <name type="ordered locus">A9601_01771</name>
</gene>
<accession>A2BNV4</accession>
<reference key="1">
    <citation type="journal article" date="2007" name="PLoS Genet.">
        <title>Patterns and implications of gene gain and loss in the evolution of Prochlorococcus.</title>
        <authorList>
            <person name="Kettler G.C."/>
            <person name="Martiny A.C."/>
            <person name="Huang K."/>
            <person name="Zucker J."/>
            <person name="Coleman M.L."/>
            <person name="Rodrigue S."/>
            <person name="Chen F."/>
            <person name="Lapidus A."/>
            <person name="Ferriera S."/>
            <person name="Johnson J."/>
            <person name="Steglich C."/>
            <person name="Church G.M."/>
            <person name="Richardson P."/>
            <person name="Chisholm S.W."/>
        </authorList>
    </citation>
    <scope>NUCLEOTIDE SEQUENCE [LARGE SCALE GENOMIC DNA]</scope>
    <source>
        <strain>AS9601</strain>
    </source>
</reference>
<evidence type="ECO:0000255" key="1">
    <source>
        <dbReference type="HAMAP-Rule" id="MF_01351"/>
    </source>
</evidence>
<feature type="chain" id="PRO_0000298531" description="NAD(P)H-quinone oxidoreductase subunit I">
    <location>
        <begin position="1"/>
        <end position="208"/>
    </location>
</feature>
<feature type="domain" description="4Fe-4S ferredoxin-type 1" evidence="1">
    <location>
        <begin position="55"/>
        <end position="84"/>
    </location>
</feature>
<feature type="domain" description="4Fe-4S ferredoxin-type 2" evidence="1">
    <location>
        <begin position="95"/>
        <end position="124"/>
    </location>
</feature>
<feature type="binding site" evidence="1">
    <location>
        <position position="64"/>
    </location>
    <ligand>
        <name>[4Fe-4S] cluster</name>
        <dbReference type="ChEBI" id="CHEBI:49883"/>
        <label>1</label>
    </ligand>
</feature>
<feature type="binding site" evidence="1">
    <location>
        <position position="67"/>
    </location>
    <ligand>
        <name>[4Fe-4S] cluster</name>
        <dbReference type="ChEBI" id="CHEBI:49883"/>
        <label>1</label>
    </ligand>
</feature>
<feature type="binding site" evidence="1">
    <location>
        <position position="70"/>
    </location>
    <ligand>
        <name>[4Fe-4S] cluster</name>
        <dbReference type="ChEBI" id="CHEBI:49883"/>
        <label>1</label>
    </ligand>
</feature>
<feature type="binding site" evidence="1">
    <location>
        <position position="74"/>
    </location>
    <ligand>
        <name>[4Fe-4S] cluster</name>
        <dbReference type="ChEBI" id="CHEBI:49883"/>
        <label>2</label>
    </ligand>
</feature>
<feature type="binding site" evidence="1">
    <location>
        <position position="104"/>
    </location>
    <ligand>
        <name>[4Fe-4S] cluster</name>
        <dbReference type="ChEBI" id="CHEBI:49883"/>
        <label>2</label>
    </ligand>
</feature>
<feature type="binding site" evidence="1">
    <location>
        <position position="107"/>
    </location>
    <ligand>
        <name>[4Fe-4S] cluster</name>
        <dbReference type="ChEBI" id="CHEBI:49883"/>
        <label>2</label>
    </ligand>
</feature>
<feature type="binding site" evidence="1">
    <location>
        <position position="110"/>
    </location>
    <ligand>
        <name>[4Fe-4S] cluster</name>
        <dbReference type="ChEBI" id="CHEBI:49883"/>
        <label>2</label>
    </ligand>
</feature>
<feature type="binding site" evidence="1">
    <location>
        <position position="114"/>
    </location>
    <ligand>
        <name>[4Fe-4S] cluster</name>
        <dbReference type="ChEBI" id="CHEBI:49883"/>
        <label>1</label>
    </ligand>
</feature>
<keyword id="KW-0004">4Fe-4S</keyword>
<keyword id="KW-0408">Iron</keyword>
<keyword id="KW-0411">Iron-sulfur</keyword>
<keyword id="KW-0472">Membrane</keyword>
<keyword id="KW-0479">Metal-binding</keyword>
<keyword id="KW-0520">NAD</keyword>
<keyword id="KW-0521">NADP</keyword>
<keyword id="KW-0618">Plastoquinone</keyword>
<keyword id="KW-0874">Quinone</keyword>
<keyword id="KW-0677">Repeat</keyword>
<keyword id="KW-0793">Thylakoid</keyword>
<keyword id="KW-1278">Translocase</keyword>
<proteinExistence type="inferred from homology"/>
<comment type="function">
    <text evidence="1">NDH-1 shuttles electrons from an unknown electron donor, via FMN and iron-sulfur (Fe-S) centers, to quinones in the respiratory and/or the photosynthetic chain. The immediate electron acceptor for the enzyme in this species is believed to be plastoquinone. Couples the redox reaction to proton translocation, and thus conserves the redox energy in a proton gradient.</text>
</comment>
<comment type="catalytic activity">
    <reaction evidence="1">
        <text>a plastoquinone + NADH + (n+1) H(+)(in) = a plastoquinol + NAD(+) + n H(+)(out)</text>
        <dbReference type="Rhea" id="RHEA:42608"/>
        <dbReference type="Rhea" id="RHEA-COMP:9561"/>
        <dbReference type="Rhea" id="RHEA-COMP:9562"/>
        <dbReference type="ChEBI" id="CHEBI:15378"/>
        <dbReference type="ChEBI" id="CHEBI:17757"/>
        <dbReference type="ChEBI" id="CHEBI:57540"/>
        <dbReference type="ChEBI" id="CHEBI:57945"/>
        <dbReference type="ChEBI" id="CHEBI:62192"/>
    </reaction>
</comment>
<comment type="catalytic activity">
    <reaction evidence="1">
        <text>a plastoquinone + NADPH + (n+1) H(+)(in) = a plastoquinol + NADP(+) + n H(+)(out)</text>
        <dbReference type="Rhea" id="RHEA:42612"/>
        <dbReference type="Rhea" id="RHEA-COMP:9561"/>
        <dbReference type="Rhea" id="RHEA-COMP:9562"/>
        <dbReference type="ChEBI" id="CHEBI:15378"/>
        <dbReference type="ChEBI" id="CHEBI:17757"/>
        <dbReference type="ChEBI" id="CHEBI:57783"/>
        <dbReference type="ChEBI" id="CHEBI:58349"/>
        <dbReference type="ChEBI" id="CHEBI:62192"/>
    </reaction>
</comment>
<comment type="cofactor">
    <cofactor evidence="1">
        <name>[4Fe-4S] cluster</name>
        <dbReference type="ChEBI" id="CHEBI:49883"/>
    </cofactor>
    <text evidence="1">Binds 2 [4Fe-4S] clusters per subunit.</text>
</comment>
<comment type="subunit">
    <text evidence="1">NDH-1 is composed of at least 11 different subunits.</text>
</comment>
<comment type="subcellular location">
    <subcellularLocation>
        <location evidence="1">Cellular thylakoid membrane</location>
        <topology evidence="1">Peripheral membrane protein</topology>
    </subcellularLocation>
</comment>
<comment type="similarity">
    <text evidence="1">Belongs to the complex I 23 kDa subunit family.</text>
</comment>
<organism>
    <name type="scientific">Prochlorococcus marinus (strain AS9601)</name>
    <dbReference type="NCBI Taxonomy" id="146891"/>
    <lineage>
        <taxon>Bacteria</taxon>
        <taxon>Bacillati</taxon>
        <taxon>Cyanobacteriota</taxon>
        <taxon>Cyanophyceae</taxon>
        <taxon>Synechococcales</taxon>
        <taxon>Prochlorococcaceae</taxon>
        <taxon>Prochlorococcus</taxon>
    </lineage>
</organism>